<name>RL17_AZOPC</name>
<comment type="subunit">
    <text evidence="1">Part of the 50S ribosomal subunit. Contacts protein L32.</text>
</comment>
<comment type="similarity">
    <text evidence="1">Belongs to the bacterial ribosomal protein bL17 family.</text>
</comment>
<accession>B6YQ59</accession>
<dbReference type="EMBL" id="AP010656">
    <property type="protein sequence ID" value="BAG83331.1"/>
    <property type="molecule type" value="Genomic_DNA"/>
</dbReference>
<dbReference type="RefSeq" id="WP_012573092.1">
    <property type="nucleotide sequence ID" value="NC_011565.1"/>
</dbReference>
<dbReference type="SMR" id="B6YQ59"/>
<dbReference type="STRING" id="511995.CFPG_068"/>
<dbReference type="KEGG" id="aps:CFPG_068"/>
<dbReference type="eggNOG" id="COG0203">
    <property type="taxonomic scope" value="Bacteria"/>
</dbReference>
<dbReference type="HOGENOM" id="CLU_074407_0_1_10"/>
<dbReference type="OrthoDB" id="9809073at2"/>
<dbReference type="Proteomes" id="UP000000723">
    <property type="component" value="Chromosome"/>
</dbReference>
<dbReference type="GO" id="GO:0022625">
    <property type="term" value="C:cytosolic large ribosomal subunit"/>
    <property type="evidence" value="ECO:0007669"/>
    <property type="project" value="TreeGrafter"/>
</dbReference>
<dbReference type="GO" id="GO:0003735">
    <property type="term" value="F:structural constituent of ribosome"/>
    <property type="evidence" value="ECO:0007669"/>
    <property type="project" value="InterPro"/>
</dbReference>
<dbReference type="GO" id="GO:0006412">
    <property type="term" value="P:translation"/>
    <property type="evidence" value="ECO:0007669"/>
    <property type="project" value="UniProtKB-UniRule"/>
</dbReference>
<dbReference type="Gene3D" id="3.90.1030.10">
    <property type="entry name" value="Ribosomal protein L17"/>
    <property type="match status" value="1"/>
</dbReference>
<dbReference type="HAMAP" id="MF_01368">
    <property type="entry name" value="Ribosomal_bL17"/>
    <property type="match status" value="1"/>
</dbReference>
<dbReference type="InterPro" id="IPR000456">
    <property type="entry name" value="Ribosomal_bL17"/>
</dbReference>
<dbReference type="InterPro" id="IPR047859">
    <property type="entry name" value="Ribosomal_bL17_CS"/>
</dbReference>
<dbReference type="InterPro" id="IPR036373">
    <property type="entry name" value="Ribosomal_bL17_sf"/>
</dbReference>
<dbReference type="NCBIfam" id="TIGR00059">
    <property type="entry name" value="L17"/>
    <property type="match status" value="1"/>
</dbReference>
<dbReference type="PANTHER" id="PTHR14413:SF16">
    <property type="entry name" value="LARGE RIBOSOMAL SUBUNIT PROTEIN BL17M"/>
    <property type="match status" value="1"/>
</dbReference>
<dbReference type="PANTHER" id="PTHR14413">
    <property type="entry name" value="RIBOSOMAL PROTEIN L17"/>
    <property type="match status" value="1"/>
</dbReference>
<dbReference type="Pfam" id="PF01196">
    <property type="entry name" value="Ribosomal_L17"/>
    <property type="match status" value="1"/>
</dbReference>
<dbReference type="SUPFAM" id="SSF64263">
    <property type="entry name" value="Prokaryotic ribosomal protein L17"/>
    <property type="match status" value="1"/>
</dbReference>
<dbReference type="PROSITE" id="PS01167">
    <property type="entry name" value="RIBOSOMAL_L17"/>
    <property type="match status" value="1"/>
</dbReference>
<organism>
    <name type="scientific">Azobacteroides pseudotrichonymphae genomovar. CFP2</name>
    <dbReference type="NCBI Taxonomy" id="511995"/>
    <lineage>
        <taxon>Bacteria</taxon>
        <taxon>Pseudomonadati</taxon>
        <taxon>Bacteroidota</taxon>
        <taxon>Bacteroidia</taxon>
        <taxon>Bacteroidales</taxon>
        <taxon>Candidatus Azobacteroides</taxon>
    </lineage>
</organism>
<sequence>MRHNRHINHLGRTHSHRKALLSNMAVSLIKHKRIFTTLAKAKEFCKYVEPILTRSRNDTTHSRRLVFRKLCDKYAVSELFREIARKIGDRPGGYTRIIKIGNRLGDNAATCFIELVDYNELMLKTAHGGATNKIRRSRRSSPHKRDINERNNIIQEDNAMTKTIEEAKGE</sequence>
<gene>
    <name evidence="1" type="primary">rplQ</name>
    <name type="ordered locus">CFPG_068</name>
</gene>
<keyword id="KW-1185">Reference proteome</keyword>
<keyword id="KW-0687">Ribonucleoprotein</keyword>
<keyword id="KW-0689">Ribosomal protein</keyword>
<feature type="chain" id="PRO_1000144373" description="Large ribosomal subunit protein bL17">
    <location>
        <begin position="1"/>
        <end position="170"/>
    </location>
</feature>
<proteinExistence type="inferred from homology"/>
<reference key="1">
    <citation type="journal article" date="2008" name="Science">
        <title>Genome of an endosymbiont coupling N2 fixation to cellulolysis within RT protist cells in termite gut.</title>
        <authorList>
            <person name="Hongoh Y."/>
            <person name="Sharma V.K."/>
            <person name="Prakash T."/>
            <person name="Noda S."/>
            <person name="Toh H."/>
            <person name="Taylor T.D."/>
            <person name="Kudo T."/>
            <person name="Sakaki Y."/>
            <person name="Toyoda A."/>
            <person name="Hattori M."/>
            <person name="Ohkuma M."/>
        </authorList>
    </citation>
    <scope>NUCLEOTIDE SEQUENCE [LARGE SCALE GENOMIC DNA]</scope>
</reference>
<evidence type="ECO:0000255" key="1">
    <source>
        <dbReference type="HAMAP-Rule" id="MF_01368"/>
    </source>
</evidence>
<evidence type="ECO:0000305" key="2"/>
<protein>
    <recommendedName>
        <fullName evidence="1">Large ribosomal subunit protein bL17</fullName>
    </recommendedName>
    <alternativeName>
        <fullName evidence="2">50S ribosomal protein L17</fullName>
    </alternativeName>
</protein>